<name>NDHJ_DRANE</name>
<comment type="function">
    <text evidence="1">NDH shuttles electrons from NAD(P)H:plastoquinone, via FMN and iron-sulfur (Fe-S) centers, to quinones in the photosynthetic chain and possibly in a chloroplast respiratory chain. The immediate electron acceptor for the enzyme in this species is believed to be plastoquinone. Couples the redox reaction to proton translocation, and thus conserves the redox energy in a proton gradient.</text>
</comment>
<comment type="catalytic activity">
    <reaction evidence="1">
        <text>a plastoquinone + NADH + (n+1) H(+)(in) = a plastoquinol + NAD(+) + n H(+)(out)</text>
        <dbReference type="Rhea" id="RHEA:42608"/>
        <dbReference type="Rhea" id="RHEA-COMP:9561"/>
        <dbReference type="Rhea" id="RHEA-COMP:9562"/>
        <dbReference type="ChEBI" id="CHEBI:15378"/>
        <dbReference type="ChEBI" id="CHEBI:17757"/>
        <dbReference type="ChEBI" id="CHEBI:57540"/>
        <dbReference type="ChEBI" id="CHEBI:57945"/>
        <dbReference type="ChEBI" id="CHEBI:62192"/>
    </reaction>
</comment>
<comment type="catalytic activity">
    <reaction evidence="1">
        <text>a plastoquinone + NADPH + (n+1) H(+)(in) = a plastoquinol + NADP(+) + n H(+)(out)</text>
        <dbReference type="Rhea" id="RHEA:42612"/>
        <dbReference type="Rhea" id="RHEA-COMP:9561"/>
        <dbReference type="Rhea" id="RHEA-COMP:9562"/>
        <dbReference type="ChEBI" id="CHEBI:15378"/>
        <dbReference type="ChEBI" id="CHEBI:17757"/>
        <dbReference type="ChEBI" id="CHEBI:57783"/>
        <dbReference type="ChEBI" id="CHEBI:58349"/>
        <dbReference type="ChEBI" id="CHEBI:62192"/>
    </reaction>
</comment>
<comment type="subunit">
    <text evidence="1">NDH is composed of at least 16 different subunits, 5 of which are encoded in the nucleus.</text>
</comment>
<comment type="subcellular location">
    <subcellularLocation>
        <location evidence="1">Plastid</location>
        <location evidence="1">Chloroplast thylakoid membrane</location>
        <topology evidence="1">Peripheral membrane protein</topology>
        <orientation evidence="1">Stromal side</orientation>
    </subcellularLocation>
</comment>
<comment type="similarity">
    <text evidence="1">Belongs to the complex I 30 kDa subunit family.</text>
</comment>
<dbReference type="EC" id="7.1.1.-" evidence="1"/>
<dbReference type="EMBL" id="AP009373">
    <property type="protein sequence ID" value="BAF50377.1"/>
    <property type="molecule type" value="Genomic_DNA"/>
</dbReference>
<dbReference type="RefSeq" id="YP_001123553.1">
    <property type="nucleotide sequence ID" value="NC_009272.1"/>
</dbReference>
<dbReference type="SMR" id="A4QL22"/>
<dbReference type="GeneID" id="4964791"/>
<dbReference type="GO" id="GO:0009535">
    <property type="term" value="C:chloroplast thylakoid membrane"/>
    <property type="evidence" value="ECO:0007669"/>
    <property type="project" value="UniProtKB-SubCell"/>
</dbReference>
<dbReference type="GO" id="GO:0008137">
    <property type="term" value="F:NADH dehydrogenase (ubiquinone) activity"/>
    <property type="evidence" value="ECO:0007669"/>
    <property type="project" value="InterPro"/>
</dbReference>
<dbReference type="GO" id="GO:0048038">
    <property type="term" value="F:quinone binding"/>
    <property type="evidence" value="ECO:0007669"/>
    <property type="project" value="UniProtKB-KW"/>
</dbReference>
<dbReference type="GO" id="GO:0019684">
    <property type="term" value="P:photosynthesis, light reaction"/>
    <property type="evidence" value="ECO:0007669"/>
    <property type="project" value="UniProtKB-UniRule"/>
</dbReference>
<dbReference type="FunFam" id="3.30.460.80:FF:000004">
    <property type="entry name" value="NAD(P)H-quinone oxidoreductase subunit J, chloroplastic"/>
    <property type="match status" value="1"/>
</dbReference>
<dbReference type="Gene3D" id="3.30.460.80">
    <property type="entry name" value="NADH:ubiquinone oxidoreductase, 30kDa subunit"/>
    <property type="match status" value="1"/>
</dbReference>
<dbReference type="HAMAP" id="MF_01357">
    <property type="entry name" value="NDH1_NuoC"/>
    <property type="match status" value="1"/>
</dbReference>
<dbReference type="InterPro" id="IPR010218">
    <property type="entry name" value="NADH_DH_suC"/>
</dbReference>
<dbReference type="InterPro" id="IPR037232">
    <property type="entry name" value="NADH_quin_OxRdtase_su_C/D-like"/>
</dbReference>
<dbReference type="InterPro" id="IPR001268">
    <property type="entry name" value="NADH_UbQ_OxRdtase_30kDa_su"/>
</dbReference>
<dbReference type="InterPro" id="IPR020396">
    <property type="entry name" value="NADH_UbQ_OxRdtase_CS"/>
</dbReference>
<dbReference type="NCBIfam" id="NF009141">
    <property type="entry name" value="PRK12494.1"/>
    <property type="match status" value="1"/>
</dbReference>
<dbReference type="PANTHER" id="PTHR10884:SF14">
    <property type="entry name" value="NADH DEHYDROGENASE [UBIQUINONE] IRON-SULFUR PROTEIN 3, MITOCHONDRIAL"/>
    <property type="match status" value="1"/>
</dbReference>
<dbReference type="PANTHER" id="PTHR10884">
    <property type="entry name" value="NADH DEHYDROGENASE UBIQUINONE IRON-SULFUR PROTEIN 3"/>
    <property type="match status" value="1"/>
</dbReference>
<dbReference type="Pfam" id="PF00329">
    <property type="entry name" value="Complex1_30kDa"/>
    <property type="match status" value="1"/>
</dbReference>
<dbReference type="SUPFAM" id="SSF143243">
    <property type="entry name" value="Nqo5-like"/>
    <property type="match status" value="1"/>
</dbReference>
<dbReference type="PROSITE" id="PS00542">
    <property type="entry name" value="COMPLEX1_30K"/>
    <property type="match status" value="1"/>
</dbReference>
<feature type="chain" id="PRO_0000358263" description="NAD(P)H-quinone oxidoreductase subunit J, chloroplastic">
    <location>
        <begin position="1"/>
        <end position="158"/>
    </location>
</feature>
<sequence>MQGTLSVWLAKRGLIHRSLGFDYQGIETLQIKPEDWHAIAVILYVYGYNYLRLQCAYDVAPGGLLASVYHLTRIEYGVNQAEEVCIKVFTQRSNPRIPSVFWVWKSTDFQERESYDMLGITYDSHPRLKRILMPESWMGWPLRKDYIAPNFYEIQDAY</sequence>
<organism>
    <name type="scientific">Draba nemorosa</name>
    <name type="common">Woodland whitlowgrass</name>
    <dbReference type="NCBI Taxonomy" id="171822"/>
    <lineage>
        <taxon>Eukaryota</taxon>
        <taxon>Viridiplantae</taxon>
        <taxon>Streptophyta</taxon>
        <taxon>Embryophyta</taxon>
        <taxon>Tracheophyta</taxon>
        <taxon>Spermatophyta</taxon>
        <taxon>Magnoliopsida</taxon>
        <taxon>eudicotyledons</taxon>
        <taxon>Gunneridae</taxon>
        <taxon>Pentapetalae</taxon>
        <taxon>rosids</taxon>
        <taxon>malvids</taxon>
        <taxon>Brassicales</taxon>
        <taxon>Brassicaceae</taxon>
        <taxon>Arabideae</taxon>
        <taxon>Draba</taxon>
    </lineage>
</organism>
<accession>A4QL22</accession>
<reference key="1">
    <citation type="submission" date="2007-03" db="EMBL/GenBank/DDBJ databases">
        <title>Sequencing analysis of Draba nemoroza chloroplast DNA.</title>
        <authorList>
            <person name="Hosouchi T."/>
            <person name="Tsuruoka H."/>
            <person name="Kotani H."/>
        </authorList>
    </citation>
    <scope>NUCLEOTIDE SEQUENCE [LARGE SCALE GENOMIC DNA]</scope>
</reference>
<gene>
    <name evidence="1" type="primary">ndhJ</name>
</gene>
<keyword id="KW-0150">Chloroplast</keyword>
<keyword id="KW-0472">Membrane</keyword>
<keyword id="KW-0520">NAD</keyword>
<keyword id="KW-0521">NADP</keyword>
<keyword id="KW-0934">Plastid</keyword>
<keyword id="KW-0618">Plastoquinone</keyword>
<keyword id="KW-0874">Quinone</keyword>
<keyword id="KW-0793">Thylakoid</keyword>
<keyword id="KW-1278">Translocase</keyword>
<keyword id="KW-0813">Transport</keyword>
<geneLocation type="chloroplast"/>
<protein>
    <recommendedName>
        <fullName evidence="1">NAD(P)H-quinone oxidoreductase subunit J, chloroplastic</fullName>
        <ecNumber evidence="1">7.1.1.-</ecNumber>
    </recommendedName>
    <alternativeName>
        <fullName>NAD(P)H dehydrogenase subunit J</fullName>
    </alternativeName>
    <alternativeName>
        <fullName evidence="1">NADH-plastoquinone oxidoreductase subunit J</fullName>
    </alternativeName>
</protein>
<proteinExistence type="inferred from homology"/>
<evidence type="ECO:0000255" key="1">
    <source>
        <dbReference type="HAMAP-Rule" id="MF_01357"/>
    </source>
</evidence>